<comment type="function">
    <text evidence="1">IF-3 binds to the 30S ribosomal subunit and shifts the equilibrium between 70S ribosomes and their 50S and 30S subunits in favor of the free subunits, thus enhancing the availability of 30S subunits on which protein synthesis initiation begins.</text>
</comment>
<comment type="subunit">
    <text evidence="1">Monomer.</text>
</comment>
<comment type="subcellular location">
    <subcellularLocation>
        <location evidence="1">Cytoplasm</location>
    </subcellularLocation>
</comment>
<comment type="similarity">
    <text evidence="1">Belongs to the IF-3 family.</text>
</comment>
<comment type="sequence caution" evidence="2">
    <conflict type="erroneous initiation">
        <sequence resource="EMBL-CDS" id="AAS80531"/>
    </conflict>
</comment>
<dbReference type="EMBL" id="AJ409350">
    <property type="protein sequence ID" value="CAC35168.1"/>
    <property type="molecule type" value="Genomic_DNA"/>
</dbReference>
<dbReference type="EMBL" id="AE017221">
    <property type="protein sequence ID" value="AAS80531.1"/>
    <property type="status" value="ALT_INIT"/>
    <property type="molecule type" value="Genomic_DNA"/>
</dbReference>
<dbReference type="RefSeq" id="WP_014629997.1">
    <property type="nucleotide sequence ID" value="NC_005835.1"/>
</dbReference>
<dbReference type="SMR" id="Q9ACJ8"/>
<dbReference type="GeneID" id="3168619"/>
<dbReference type="KEGG" id="tth:TT_C0183"/>
<dbReference type="eggNOG" id="COG0290">
    <property type="taxonomic scope" value="Bacteria"/>
</dbReference>
<dbReference type="HOGENOM" id="CLU_054919_3_2_0"/>
<dbReference type="OrthoDB" id="9806014at2"/>
<dbReference type="Proteomes" id="UP000000592">
    <property type="component" value="Chromosome"/>
</dbReference>
<dbReference type="GO" id="GO:0005829">
    <property type="term" value="C:cytosol"/>
    <property type="evidence" value="ECO:0007669"/>
    <property type="project" value="TreeGrafter"/>
</dbReference>
<dbReference type="GO" id="GO:0016020">
    <property type="term" value="C:membrane"/>
    <property type="evidence" value="ECO:0007669"/>
    <property type="project" value="TreeGrafter"/>
</dbReference>
<dbReference type="GO" id="GO:0043022">
    <property type="term" value="F:ribosome binding"/>
    <property type="evidence" value="ECO:0007669"/>
    <property type="project" value="TreeGrafter"/>
</dbReference>
<dbReference type="GO" id="GO:0003743">
    <property type="term" value="F:translation initiation factor activity"/>
    <property type="evidence" value="ECO:0007669"/>
    <property type="project" value="UniProtKB-UniRule"/>
</dbReference>
<dbReference type="GO" id="GO:0032790">
    <property type="term" value="P:ribosome disassembly"/>
    <property type="evidence" value="ECO:0007669"/>
    <property type="project" value="TreeGrafter"/>
</dbReference>
<dbReference type="FunFam" id="3.10.20.80:FF:000001">
    <property type="entry name" value="Translation initiation factor IF-3"/>
    <property type="match status" value="1"/>
</dbReference>
<dbReference type="FunFam" id="3.30.110.10:FF:000001">
    <property type="entry name" value="Translation initiation factor IF-3"/>
    <property type="match status" value="1"/>
</dbReference>
<dbReference type="Gene3D" id="3.30.110.10">
    <property type="entry name" value="Translation initiation factor 3 (IF-3), C-terminal domain"/>
    <property type="match status" value="1"/>
</dbReference>
<dbReference type="Gene3D" id="3.10.20.80">
    <property type="entry name" value="Translation initiation factor 3 (IF-3), N-terminal domain"/>
    <property type="match status" value="1"/>
</dbReference>
<dbReference type="HAMAP" id="MF_00080">
    <property type="entry name" value="IF_3"/>
    <property type="match status" value="1"/>
</dbReference>
<dbReference type="InterPro" id="IPR036788">
    <property type="entry name" value="T_IF-3_C_sf"/>
</dbReference>
<dbReference type="InterPro" id="IPR036787">
    <property type="entry name" value="T_IF-3_N_sf"/>
</dbReference>
<dbReference type="InterPro" id="IPR001288">
    <property type="entry name" value="Translation_initiation_fac_3"/>
</dbReference>
<dbReference type="InterPro" id="IPR019815">
    <property type="entry name" value="Translation_initiation_fac_3_C"/>
</dbReference>
<dbReference type="InterPro" id="IPR019814">
    <property type="entry name" value="Translation_initiation_fac_3_N"/>
</dbReference>
<dbReference type="NCBIfam" id="TIGR00168">
    <property type="entry name" value="infC"/>
    <property type="match status" value="1"/>
</dbReference>
<dbReference type="PANTHER" id="PTHR10938">
    <property type="entry name" value="TRANSLATION INITIATION FACTOR IF-3"/>
    <property type="match status" value="1"/>
</dbReference>
<dbReference type="PANTHER" id="PTHR10938:SF0">
    <property type="entry name" value="TRANSLATION INITIATION FACTOR IF-3, MITOCHONDRIAL"/>
    <property type="match status" value="1"/>
</dbReference>
<dbReference type="Pfam" id="PF00707">
    <property type="entry name" value="IF3_C"/>
    <property type="match status" value="1"/>
</dbReference>
<dbReference type="Pfam" id="PF05198">
    <property type="entry name" value="IF3_N"/>
    <property type="match status" value="1"/>
</dbReference>
<dbReference type="SUPFAM" id="SSF55200">
    <property type="entry name" value="Translation initiation factor IF3, C-terminal domain"/>
    <property type="match status" value="1"/>
</dbReference>
<dbReference type="SUPFAM" id="SSF54364">
    <property type="entry name" value="Translation initiation factor IF3, N-terminal domain"/>
    <property type="match status" value="1"/>
</dbReference>
<reference key="1">
    <citation type="journal article" date="2001" name="EMBO J.">
        <title>Crystal structures of complexes of the small ribosomal subunit with tetracycline, edeine and IF3.</title>
        <authorList>
            <person name="Pioletti M."/>
            <person name="Schluenzen F."/>
            <person name="Harms J."/>
            <person name="Zarivach R."/>
            <person name="Gluehmann M."/>
            <person name="Avila H."/>
            <person name="Bashan A."/>
            <person name="Bartels H."/>
            <person name="Auerbach T."/>
            <person name="Jacobi C."/>
            <person name="Hartsch T."/>
            <person name="Yonath A."/>
            <person name="Franceschi F."/>
        </authorList>
    </citation>
    <scope>NUCLEOTIDE SEQUENCE [GENOMIC DNA]</scope>
</reference>
<reference key="2">
    <citation type="journal article" date="2004" name="Nat. Biotechnol.">
        <title>The genome sequence of the extreme thermophile Thermus thermophilus.</title>
        <authorList>
            <person name="Henne A."/>
            <person name="Brueggemann H."/>
            <person name="Raasch C."/>
            <person name="Wiezer A."/>
            <person name="Hartsch T."/>
            <person name="Liesegang H."/>
            <person name="Johann A."/>
            <person name="Lienard T."/>
            <person name="Gohl O."/>
            <person name="Martinez-Arias R."/>
            <person name="Jacobi C."/>
            <person name="Starkuviene V."/>
            <person name="Schlenczeck S."/>
            <person name="Dencker S."/>
            <person name="Huber R."/>
            <person name="Klenk H.-P."/>
            <person name="Kramer W."/>
            <person name="Merkl R."/>
            <person name="Gottschalk G."/>
            <person name="Fritz H.-J."/>
        </authorList>
    </citation>
    <scope>NUCLEOTIDE SEQUENCE [LARGE SCALE GENOMIC DNA]</scope>
    <source>
        <strain>ATCC BAA-163 / DSM 7039 / HB27</strain>
    </source>
</reference>
<keyword id="KW-0963">Cytoplasm</keyword>
<keyword id="KW-0396">Initiation factor</keyword>
<keyword id="KW-0648">Protein biosynthesis</keyword>
<name>IF3_THET2</name>
<accession>Q9ACJ8</accession>
<sequence length="171" mass="19866">MKEYLTNERIRAKQVRVVGPDGKQLGIMDTREALRLAQEMDLDLVLVGPNADPPVARIMDYSKWRYEQQMAEKEARKKAKRTEVKSIKFRVKIDEHDYQTKLGHIKRFLQEGHKVKVTIMFRGREVAHPELGERILNRVTEDLKDLAVVEMKPEMLGRDMNMLLAPVKVSA</sequence>
<evidence type="ECO:0000255" key="1">
    <source>
        <dbReference type="HAMAP-Rule" id="MF_00080"/>
    </source>
</evidence>
<evidence type="ECO:0000305" key="2"/>
<gene>
    <name evidence="1" type="primary">infC</name>
    <name type="ordered locus">TT_C0183</name>
</gene>
<feature type="chain" id="PRO_0000177598" description="Translation initiation factor IF-3">
    <location>
        <begin position="1"/>
        <end position="171"/>
    </location>
</feature>
<organism>
    <name type="scientific">Thermus thermophilus (strain ATCC BAA-163 / DSM 7039 / HB27)</name>
    <dbReference type="NCBI Taxonomy" id="262724"/>
    <lineage>
        <taxon>Bacteria</taxon>
        <taxon>Thermotogati</taxon>
        <taxon>Deinococcota</taxon>
        <taxon>Deinococci</taxon>
        <taxon>Thermales</taxon>
        <taxon>Thermaceae</taxon>
        <taxon>Thermus</taxon>
    </lineage>
</organism>
<protein>
    <recommendedName>
        <fullName evidence="1">Translation initiation factor IF-3</fullName>
    </recommendedName>
</protein>
<proteinExistence type="inferred from homology"/>